<proteinExistence type="inferred from homology"/>
<feature type="chain" id="PRO_0000093805" description="Tyrosine-specific transport system 1">
    <location>
        <begin position="1"/>
        <end position="400"/>
    </location>
</feature>
<feature type="transmembrane region" description="Helical" evidence="2">
    <location>
        <begin position="5"/>
        <end position="25"/>
    </location>
</feature>
<feature type="transmembrane region" description="Helical" evidence="2">
    <location>
        <begin position="34"/>
        <end position="54"/>
    </location>
</feature>
<feature type="transmembrane region" description="Helical" evidence="2">
    <location>
        <begin position="80"/>
        <end position="100"/>
    </location>
</feature>
<feature type="transmembrane region" description="Helical" evidence="2">
    <location>
        <begin position="117"/>
        <end position="137"/>
    </location>
</feature>
<feature type="transmembrane region" description="Helical" evidence="2">
    <location>
        <begin position="143"/>
        <end position="163"/>
    </location>
</feature>
<feature type="transmembrane region" description="Helical" evidence="2">
    <location>
        <begin position="176"/>
        <end position="196"/>
    </location>
</feature>
<feature type="transmembrane region" description="Helical" evidence="2">
    <location>
        <begin position="211"/>
        <end position="231"/>
    </location>
</feature>
<feature type="transmembrane region" description="Helical" evidence="2">
    <location>
        <begin position="250"/>
        <end position="270"/>
    </location>
</feature>
<feature type="transmembrane region" description="Helical" evidence="2">
    <location>
        <begin position="273"/>
        <end position="293"/>
    </location>
</feature>
<feature type="transmembrane region" description="Helical" evidence="2">
    <location>
        <begin position="313"/>
        <end position="333"/>
    </location>
</feature>
<feature type="transmembrane region" description="Helical" evidence="2">
    <location>
        <begin position="335"/>
        <end position="355"/>
    </location>
</feature>
<feature type="transmembrane region" description="Helical" evidence="2">
    <location>
        <begin position="370"/>
        <end position="390"/>
    </location>
</feature>
<sequence>MNKTVGSTLLVAGTMIGAGMLAMPLTSAGIGFGFTLVLLLGLWALLTFSALLFVELYQTAESDAGIGTLAEQYFGKTGRIIATAVLIIFLYALIAAYISGGGSLLKDLLPESFGDKVSVLLFTVIFGSFIVIGTHSVDKINRVLFFVMLAAFAVVLSLMLPEIKFDNLMATPIDKALIISASPVFFTAFGFHGSIPSLNKYLDGNVKALRFSILVGSAITLCAYILWQLSTHGLLTQNEFLQILKEDATLNGLVKATFAITGSNVIASAVKLFSTLALITSFLGVGLGLLECIEDLLKRSFNVTAGRISLGLLTFIPPLVFALFYPEGFILALGYAGQMFAFYAVVLPVSLVWKARRAHANLPYKVWGGNLTLIIVLVLGVLITSIPFAIRAGYLPFVVG</sequence>
<evidence type="ECO:0000250" key="1">
    <source>
        <dbReference type="UniProtKB" id="P0AAD4"/>
    </source>
</evidence>
<evidence type="ECO:0000255" key="2"/>
<evidence type="ECO:0000305" key="3"/>
<gene>
    <name type="primary">tyrP-A</name>
    <name type="ordered locus">HI_0477</name>
</gene>
<organism>
    <name type="scientific">Haemophilus influenzae (strain ATCC 51907 / DSM 11121 / KW20 / Rd)</name>
    <dbReference type="NCBI Taxonomy" id="71421"/>
    <lineage>
        <taxon>Bacteria</taxon>
        <taxon>Pseudomonadati</taxon>
        <taxon>Pseudomonadota</taxon>
        <taxon>Gammaproteobacteria</taxon>
        <taxon>Pasteurellales</taxon>
        <taxon>Pasteurellaceae</taxon>
        <taxon>Haemophilus</taxon>
    </lineage>
</organism>
<keyword id="KW-0029">Amino-acid transport</keyword>
<keyword id="KW-0997">Cell inner membrane</keyword>
<keyword id="KW-1003">Cell membrane</keyword>
<keyword id="KW-0472">Membrane</keyword>
<keyword id="KW-1185">Reference proteome</keyword>
<keyword id="KW-0769">Symport</keyword>
<keyword id="KW-0812">Transmembrane</keyword>
<keyword id="KW-1133">Transmembrane helix</keyword>
<keyword id="KW-0813">Transport</keyword>
<protein>
    <recommendedName>
        <fullName evidence="1">Tyrosine-specific transport system 1</fullName>
    </recommendedName>
    <alternativeName>
        <fullName evidence="1">Tyrosine permease 1</fullName>
    </alternativeName>
    <alternativeName>
        <fullName evidence="1">Tyrosine:H(+) symporter 1</fullName>
    </alternativeName>
</protein>
<comment type="function">
    <text evidence="1">Transports tyrosine across the cytoplasmic membrane. The transport system is energized by the proton motive force.</text>
</comment>
<comment type="catalytic activity">
    <reaction evidence="1">
        <text>L-tyrosine(in) + H(+)(in) = L-tyrosine(out) + H(+)(out)</text>
        <dbReference type="Rhea" id="RHEA:28875"/>
        <dbReference type="ChEBI" id="CHEBI:15378"/>
        <dbReference type="ChEBI" id="CHEBI:58315"/>
    </reaction>
</comment>
<comment type="subcellular location">
    <subcellularLocation>
        <location evidence="1">Cell inner membrane</location>
        <topology evidence="2">Multi-pass membrane protein</topology>
    </subcellularLocation>
</comment>
<comment type="similarity">
    <text evidence="3">Belongs to the amino acid/polyamine transporter 2 family. Mtr/TnaB/TyrP permease subfamily.</text>
</comment>
<dbReference type="EMBL" id="L42023">
    <property type="protein sequence ID" value="AAC22135.1"/>
    <property type="molecule type" value="Genomic_DNA"/>
</dbReference>
<dbReference type="PIR" id="B64071">
    <property type="entry name" value="B64071"/>
</dbReference>
<dbReference type="RefSeq" id="NP_438637.1">
    <property type="nucleotide sequence ID" value="NC_000907.1"/>
</dbReference>
<dbReference type="SMR" id="P44727"/>
<dbReference type="STRING" id="71421.HI_0477"/>
<dbReference type="EnsemblBacteria" id="AAC22135">
    <property type="protein sequence ID" value="AAC22135"/>
    <property type="gene ID" value="HI_0477"/>
</dbReference>
<dbReference type="KEGG" id="hin:HI_0477"/>
<dbReference type="PATRIC" id="fig|71421.8.peg.496"/>
<dbReference type="eggNOG" id="COG0814">
    <property type="taxonomic scope" value="Bacteria"/>
</dbReference>
<dbReference type="HOGENOM" id="CLU_038102_3_0_6"/>
<dbReference type="OrthoDB" id="18749at2"/>
<dbReference type="PhylomeDB" id="P44727"/>
<dbReference type="BioCyc" id="HINF71421:G1GJ1-492-MONOMER"/>
<dbReference type="Proteomes" id="UP000000579">
    <property type="component" value="Chromosome"/>
</dbReference>
<dbReference type="GO" id="GO:0005886">
    <property type="term" value="C:plasma membrane"/>
    <property type="evidence" value="ECO:0000318"/>
    <property type="project" value="GO_Central"/>
</dbReference>
<dbReference type="GO" id="GO:0015173">
    <property type="term" value="F:aromatic amino acid transmembrane transporter activity"/>
    <property type="evidence" value="ECO:0007669"/>
    <property type="project" value="InterPro"/>
</dbReference>
<dbReference type="GO" id="GO:0015293">
    <property type="term" value="F:symporter activity"/>
    <property type="evidence" value="ECO:0007669"/>
    <property type="project" value="UniProtKB-KW"/>
</dbReference>
<dbReference type="GO" id="GO:0022857">
    <property type="term" value="F:transmembrane transporter activity"/>
    <property type="evidence" value="ECO:0000318"/>
    <property type="project" value="GO_Central"/>
</dbReference>
<dbReference type="GO" id="GO:0003333">
    <property type="term" value="P:amino acid transmembrane transport"/>
    <property type="evidence" value="ECO:0000318"/>
    <property type="project" value="GO_Central"/>
</dbReference>
<dbReference type="Gene3D" id="1.20.1740.10">
    <property type="entry name" value="Amino acid/polyamine transporter I"/>
    <property type="match status" value="1"/>
</dbReference>
<dbReference type="InterPro" id="IPR018227">
    <property type="entry name" value="Amino_acid_transport_2"/>
</dbReference>
<dbReference type="InterPro" id="IPR013061">
    <property type="entry name" value="Trp/try_permease_CS"/>
</dbReference>
<dbReference type="InterPro" id="IPR013059">
    <property type="entry name" value="Trp_tyr_transpt"/>
</dbReference>
<dbReference type="NCBIfam" id="TIGR00837">
    <property type="entry name" value="araaP"/>
    <property type="match status" value="1"/>
</dbReference>
<dbReference type="PANTHER" id="PTHR46997">
    <property type="entry name" value="LOW AFFINITY TRYPTOPHAN PERMEASE-RELATED"/>
    <property type="match status" value="1"/>
</dbReference>
<dbReference type="PANTHER" id="PTHR46997:SF2">
    <property type="entry name" value="TYROSINE-SPECIFIC TRANSPORT SYSTEM"/>
    <property type="match status" value="1"/>
</dbReference>
<dbReference type="Pfam" id="PF03222">
    <property type="entry name" value="Trp_Tyr_perm"/>
    <property type="match status" value="1"/>
</dbReference>
<dbReference type="PRINTS" id="PR00166">
    <property type="entry name" value="AROAAPRMEASE"/>
</dbReference>
<dbReference type="PROSITE" id="PS00594">
    <property type="entry name" value="AROMATIC_AA_PERMEASE_1"/>
    <property type="match status" value="1"/>
</dbReference>
<name>TYRPA_HAEIN</name>
<reference key="1">
    <citation type="journal article" date="1995" name="Science">
        <title>Whole-genome random sequencing and assembly of Haemophilus influenzae Rd.</title>
        <authorList>
            <person name="Fleischmann R.D."/>
            <person name="Adams M.D."/>
            <person name="White O."/>
            <person name="Clayton R.A."/>
            <person name="Kirkness E.F."/>
            <person name="Kerlavage A.R."/>
            <person name="Bult C.J."/>
            <person name="Tomb J.-F."/>
            <person name="Dougherty B.A."/>
            <person name="Merrick J.M."/>
            <person name="McKenney K."/>
            <person name="Sutton G.G."/>
            <person name="FitzHugh W."/>
            <person name="Fields C.A."/>
            <person name="Gocayne J.D."/>
            <person name="Scott J.D."/>
            <person name="Shirley R."/>
            <person name="Liu L.-I."/>
            <person name="Glodek A."/>
            <person name="Kelley J.M."/>
            <person name="Weidman J.F."/>
            <person name="Phillips C.A."/>
            <person name="Spriggs T."/>
            <person name="Hedblom E."/>
            <person name="Cotton M.D."/>
            <person name="Utterback T.R."/>
            <person name="Hanna M.C."/>
            <person name="Nguyen D.T."/>
            <person name="Saudek D.M."/>
            <person name="Brandon R.C."/>
            <person name="Fine L.D."/>
            <person name="Fritchman J.L."/>
            <person name="Fuhrmann J.L."/>
            <person name="Geoghagen N.S.M."/>
            <person name="Gnehm C.L."/>
            <person name="McDonald L.A."/>
            <person name="Small K.V."/>
            <person name="Fraser C.M."/>
            <person name="Smith H.O."/>
            <person name="Venter J.C."/>
        </authorList>
    </citation>
    <scope>NUCLEOTIDE SEQUENCE [LARGE SCALE GENOMIC DNA]</scope>
    <source>
        <strain>ATCC 51907 / DSM 11121 / KW20 / Rd</strain>
    </source>
</reference>
<accession>P44727</accession>